<keyword id="KW-0002">3D-structure</keyword>
<keyword id="KW-1048">Host nucleus</keyword>
<keyword id="KW-1185">Reference proteome</keyword>
<keyword id="KW-0964">Secreted</keyword>
<keyword id="KW-0732">Signal</keyword>
<keyword id="KW-0843">Virulence</keyword>
<gene>
    <name evidence="5" type="primary">SFI3</name>
    <name evidence="4" type="synonym">PexRD16</name>
    <name type="ORF">PITG_06087</name>
</gene>
<reference key="1">
    <citation type="journal article" date="2009" name="Nature">
        <title>Genome sequence and analysis of the Irish potato famine pathogen Phytophthora infestans.</title>
        <authorList>
            <consortium name="The Broad Institute Genome Sequencing Platform"/>
            <person name="Haas B.J."/>
            <person name="Kamoun S."/>
            <person name="Zody M.C."/>
            <person name="Jiang R.H."/>
            <person name="Handsaker R.E."/>
            <person name="Cano L.M."/>
            <person name="Grabherr M."/>
            <person name="Kodira C.D."/>
            <person name="Raffaele S."/>
            <person name="Torto-Alalibo T."/>
            <person name="Bozkurt T.O."/>
            <person name="Ah-Fong A.M."/>
            <person name="Alvarado L."/>
            <person name="Anderson V.L."/>
            <person name="Armstrong M.R."/>
            <person name="Avrova A."/>
            <person name="Baxter L."/>
            <person name="Beynon J."/>
            <person name="Boevink P.C."/>
            <person name="Bollmann S.R."/>
            <person name="Bos J.I."/>
            <person name="Bulone V."/>
            <person name="Cai G."/>
            <person name="Cakir C."/>
            <person name="Carrington J.C."/>
            <person name="Chawner M."/>
            <person name="Conti L."/>
            <person name="Costanzo S."/>
            <person name="Ewan R."/>
            <person name="Fahlgren N."/>
            <person name="Fischbach M.A."/>
            <person name="Fugelstad J."/>
            <person name="Gilroy E.M."/>
            <person name="Gnerre S."/>
            <person name="Green P.J."/>
            <person name="Grenville-Briggs L.J."/>
            <person name="Griffith J."/>
            <person name="Grunwald N.J."/>
            <person name="Horn K."/>
            <person name="Horner N.R."/>
            <person name="Hu C.H."/>
            <person name="Huitema E."/>
            <person name="Jeong D.H."/>
            <person name="Jones A.M."/>
            <person name="Jones J.D."/>
            <person name="Jones R.W."/>
            <person name="Karlsson E.K."/>
            <person name="Kunjeti S.G."/>
            <person name="Lamour K."/>
            <person name="Liu Z."/>
            <person name="Ma L."/>
            <person name="Maclean D."/>
            <person name="Chibucos M.C."/>
            <person name="McDonald H."/>
            <person name="McWalters J."/>
            <person name="Meijer H.J."/>
            <person name="Morgan W."/>
            <person name="Morris P.F."/>
            <person name="Munro C.A."/>
            <person name="O'Neill K."/>
            <person name="Ospina-Giraldo M."/>
            <person name="Pinzon A."/>
            <person name="Pritchard L."/>
            <person name="Ramsahoye B."/>
            <person name="Ren Q."/>
            <person name="Restrepo S."/>
            <person name="Roy S."/>
            <person name="Sadanandom A."/>
            <person name="Savidor A."/>
            <person name="Schornack S."/>
            <person name="Schwartz D.C."/>
            <person name="Schumann U.D."/>
            <person name="Schwessinger B."/>
            <person name="Seyer L."/>
            <person name="Sharpe T."/>
            <person name="Silvar C."/>
            <person name="Song J."/>
            <person name="Studholme D.J."/>
            <person name="Sykes S."/>
            <person name="Thines M."/>
            <person name="van de Vondervoort P.J."/>
            <person name="Phuntumart V."/>
            <person name="Wawra S."/>
            <person name="Weide R."/>
            <person name="Win J."/>
            <person name="Young C."/>
            <person name="Zhou S."/>
            <person name="Fry W."/>
            <person name="Meyers B.C."/>
            <person name="van West P."/>
            <person name="Ristaino J."/>
            <person name="Govers F."/>
            <person name="Birch P.R."/>
            <person name="Whisson S.C."/>
            <person name="Judelson H.S."/>
            <person name="Nusbaum C."/>
        </authorList>
    </citation>
    <scope>NUCLEOTIDE SEQUENCE [LARGE SCALE GENOMIC DNA]</scope>
    <source>
        <strain>T30-4</strain>
    </source>
</reference>
<reference key="2">
    <citation type="journal article" date="2009" name="Plant Cell">
        <title>In planta expression screens of Phytophthora infestans RXLR effectors reveal diverse phenotypes, including activation of the Solanum bulbocastanum disease resistance protein Rpi-blb2.</title>
        <authorList>
            <person name="Oh S.K."/>
            <person name="Young C."/>
            <person name="Lee M."/>
            <person name="Oliva R."/>
            <person name="Bozkurt T.O."/>
            <person name="Cano L.M."/>
            <person name="Win J."/>
            <person name="Bos J.I."/>
            <person name="Liu H.Y."/>
            <person name="van Damme M."/>
            <person name="Morgan W."/>
            <person name="Choi D."/>
            <person name="Van der Vossen E.A."/>
            <person name="Vleeshouwers V.G."/>
            <person name="Kamoun S."/>
        </authorList>
    </citation>
    <scope>IDENTIFICATION</scope>
    <scope>DOMAIN</scope>
</reference>
<reference key="3">
    <citation type="journal article" date="2014" name="PLoS Pathog.">
        <title>Functionally redundant RXLR effectors from Phytophthora infestans act at different steps to suppress early flg22-triggered immunity.</title>
        <authorList>
            <person name="Zheng X."/>
            <person name="McLellan H."/>
            <person name="Fraiture M."/>
            <person name="Liu X."/>
            <person name="Boevink P.C."/>
            <person name="Gilroy E.M."/>
            <person name="Chen Y."/>
            <person name="Kandel K."/>
            <person name="Sessa G."/>
            <person name="Birch P.R."/>
            <person name="Brunner F."/>
        </authorList>
    </citation>
    <scope>FUNCTION</scope>
    <scope>SUBCELLULAR LOCATION</scope>
</reference>
<reference key="4">
    <citation type="journal article" date="2019" name="New Phytol.">
        <title>Phytophthora infestans effector SFI3 targets potato UBK to suppress early immune transcriptional responses.</title>
        <authorList>
            <person name="He Q."/>
            <person name="McLellan H."/>
            <person name="Hughes R.K."/>
            <person name="Boevink P.C."/>
            <person name="Armstrong M."/>
            <person name="Lu Y."/>
            <person name="Banfield M.J."/>
            <person name="Tian Z."/>
            <person name="Birch P.R.J."/>
        </authorList>
    </citation>
    <scope>X-RAY CRYSTALLOGRAPHY (1.70 ANGSTROMS) OF 49-127</scope>
    <scope>SUBUNIT</scope>
    <scope>FUNCTION</scope>
    <scope>SUBCELLULAR LOCATION</scope>
    <scope>INTERACTION WITH HOST UBK</scope>
    <scope>MUTAGENESIS OF LEU-86; LEU-100 AND LEU-103</scope>
</reference>
<feature type="signal peptide" evidence="1">
    <location>
        <begin position="1"/>
        <end position="20"/>
    </location>
</feature>
<feature type="chain" id="PRO_5003012132" description="RxLR effector protein SFI3">
    <location>
        <begin position="21"/>
        <end position="127"/>
    </location>
</feature>
<feature type="region of interest" description="WY-domain" evidence="8">
    <location>
        <begin position="72"/>
        <end position="107"/>
    </location>
</feature>
<feature type="short sequence motif" description="RxLR-dEER" evidence="7">
    <location>
        <begin position="40"/>
        <end position="62"/>
    </location>
</feature>
<feature type="mutagenesis site" description="Disrupts homooligomerization, prevents association with UBK, impairs nucleolar localization and accumulates in the nucleoplasm with cytoplasmic background; when associated with D-100 or D-103." evidence="3">
    <original>L</original>
    <variation>D</variation>
    <location>
        <position position="86"/>
    </location>
</feature>
<feature type="mutagenesis site" description="Disrupts homooligomerization, prevents association with UBK, impairs nucleolar localization and accumulates in the nucleoplasm with cytoplasmic background; when associated with D-86." evidence="3">
    <original>L</original>
    <variation>D</variation>
    <location>
        <position position="100"/>
    </location>
</feature>
<feature type="mutagenesis site" description="Disrupts homooligomerization, prevents association with UBK, impairs nucleolar localization and accumulates in the nucleoplasm with cytoplasmic background; when associated with D-86." evidence="3">
    <original>L</original>
    <variation>D</variation>
    <location>
        <position position="103"/>
    </location>
</feature>
<feature type="helix" evidence="9">
    <location>
        <begin position="64"/>
        <end position="74"/>
    </location>
</feature>
<feature type="helix" evidence="9">
    <location>
        <begin position="79"/>
        <end position="116"/>
    </location>
</feature>
<sequence>MRFLLVAVVAMMALVSSSTAAVAETSNDINTMNNNQEFARSLRNTEERSIAAILAEAGEEDRAAWRINYRAWYKAKLTPTQVKTVLGVSQAEMNNVAKQLQRLYLGYYSFYTAMEKKKEEKKRLATP</sequence>
<name>SFI3_PHYIT</name>
<accession>D0N6D2</accession>
<protein>
    <recommendedName>
        <fullName evidence="5">RxLR effector protein SFI3</fullName>
    </recommendedName>
    <alternativeName>
        <fullName evidence="5">Suppressor of early Flg22-induced immune response 3</fullName>
    </alternativeName>
</protein>
<comment type="function">
    <text evidence="2 3">Effector that suppresses flg22-induced post-translational MAP kinase activation in potato and tomato, but not in Arabidopsis. The perception of highly conserved pathogen- or microbe-associated molecular patterns (PAMPs/MAMPs), such as flg22, triggers converging signaling pathways recruiting MAP kinase cascades and inducing transcriptional re-programming, yielding a generic antimicrobial response (PubMed:24763622, PubMed:30536576). Does not suppress programmed cell death triggered by the P.infestans elicitin infestin-1 (INF1), or by co-expression of tomato Cf4 with Cladosporium fulvum Avr4 (PubMed:30536576). Suppresses early pattern-triggered immunity (PTI) via interaction with the U-box-kinase protein UBK, a positive regulator of specific PTI pathways in both potato and Nicotiana benthamiana (PubMed:30536576).</text>
</comment>
<comment type="subunit">
    <text evidence="3">Forms an unusual trans-homodimer (PubMed:30536576). Interacts with host UBK (PubMed:30536576).</text>
</comment>
<comment type="subcellular location">
    <subcellularLocation>
        <location evidence="2">Secreted</location>
    </subcellularLocation>
    <subcellularLocation>
        <location evidence="2">Host nucleus</location>
        <location evidence="2">Host nucleolus</location>
    </subcellularLocation>
    <subcellularLocation>
        <location evidence="3">Host nucleus</location>
    </subcellularLocation>
    <text evidence="2">Forms a ring around the nucleolus.</text>
</comment>
<comment type="domain">
    <text evidence="3">The WY-domain is involved in the homodimerization leading to a novel trans WY-domain configuration in which the Trp and Tyr residues are derived from separate monomers.</text>
</comment>
<comment type="domain">
    <text evidence="7">The RxLR-dEER motif acts to carry the protein into the host cell cytoplasm through binding to cell surface phosphatidylinositol-3-phosphate.</text>
</comment>
<comment type="similarity">
    <text evidence="6">Belongs to the RxLR effector family.</text>
</comment>
<dbReference type="EMBL" id="DS028126">
    <property type="protein sequence ID" value="EEY70623.1"/>
    <property type="molecule type" value="Genomic_DNA"/>
</dbReference>
<dbReference type="RefSeq" id="XP_002998277.1">
    <property type="nucleotide sequence ID" value="XM_002998231.1"/>
</dbReference>
<dbReference type="PDB" id="6GU1">
    <property type="method" value="X-ray"/>
    <property type="resolution" value="1.70 A"/>
    <property type="chains" value="A/B=49-127"/>
</dbReference>
<dbReference type="PDBsum" id="6GU1"/>
<dbReference type="SMR" id="D0N6D2"/>
<dbReference type="STRING" id="403677.D0N6D2"/>
<dbReference type="EnsemblProtists" id="PITG_06087T0">
    <property type="protein sequence ID" value="PITG_06087T0"/>
    <property type="gene ID" value="PITG_06087"/>
</dbReference>
<dbReference type="GeneID" id="9472246"/>
<dbReference type="KEGG" id="pif:PITG_06087"/>
<dbReference type="VEuPathDB" id="FungiDB:PITG_06087"/>
<dbReference type="eggNOG" id="ENOG502RFDT">
    <property type="taxonomic scope" value="Eukaryota"/>
</dbReference>
<dbReference type="HOGENOM" id="CLU_1974887_0_0_1"/>
<dbReference type="InParanoid" id="D0N6D2"/>
<dbReference type="OMA" id="RAWYNAK"/>
<dbReference type="OrthoDB" id="119584at2759"/>
<dbReference type="PHI-base" id="PHI:4202"/>
<dbReference type="Proteomes" id="UP000006643">
    <property type="component" value="Partially assembled WGS sequence"/>
</dbReference>
<dbReference type="GO" id="GO:0005576">
    <property type="term" value="C:extracellular region"/>
    <property type="evidence" value="ECO:0007669"/>
    <property type="project" value="UniProtKB-SubCell"/>
</dbReference>
<dbReference type="GO" id="GO:0044196">
    <property type="term" value="C:host cell nucleolus"/>
    <property type="evidence" value="ECO:0007669"/>
    <property type="project" value="UniProtKB-SubCell"/>
</dbReference>
<organism>
    <name type="scientific">Phytophthora infestans (strain T30-4)</name>
    <name type="common">Potato late blight agent</name>
    <dbReference type="NCBI Taxonomy" id="403677"/>
    <lineage>
        <taxon>Eukaryota</taxon>
        <taxon>Sar</taxon>
        <taxon>Stramenopiles</taxon>
        <taxon>Oomycota</taxon>
        <taxon>Peronosporales</taxon>
        <taxon>Peronosporaceae</taxon>
        <taxon>Phytophthora</taxon>
    </lineage>
</organism>
<evidence type="ECO:0000255" key="1"/>
<evidence type="ECO:0000269" key="2">
    <source>
    </source>
</evidence>
<evidence type="ECO:0000269" key="3">
    <source>
    </source>
</evidence>
<evidence type="ECO:0000303" key="4">
    <source>
    </source>
</evidence>
<evidence type="ECO:0000303" key="5">
    <source>
    </source>
</evidence>
<evidence type="ECO:0000305" key="6"/>
<evidence type="ECO:0000305" key="7">
    <source>
    </source>
</evidence>
<evidence type="ECO:0000305" key="8">
    <source>
    </source>
</evidence>
<evidence type="ECO:0007829" key="9">
    <source>
        <dbReference type="PDB" id="6GU1"/>
    </source>
</evidence>
<proteinExistence type="evidence at protein level"/>